<name>NMU_RABIT</name>
<accession>P34965</accession>
<protein>
    <recommendedName>
        <fullName>Neuromedin-U-25</fullName>
        <shortName>NmU-25</shortName>
    </recommendedName>
</protein>
<comment type="function">
    <text>Stimulates uterine smooth muscle contraction and causes selective vasoconstriction.</text>
</comment>
<comment type="subcellular location">
    <subcellularLocation>
        <location>Secreted</location>
    </subcellularLocation>
</comment>
<comment type="similarity">
    <text evidence="2">Belongs to the NmU family.</text>
</comment>
<reference key="1">
    <citation type="journal article" date="1991" name="Regul. Pept.">
        <title>Rabbit neuromedin U-25: lack of conservation of a posttranslational processing site.</title>
        <authorList>
            <person name="Kage R."/>
            <person name="O'Harte F."/>
            <person name="Thim L."/>
            <person name="Conlon J.M."/>
        </authorList>
    </citation>
    <scope>PROTEIN SEQUENCE</scope>
    <scope>AMIDATION AT ASN-25</scope>
    <source>
        <tissue>Small intestine</tissue>
    </source>
</reference>
<dbReference type="PIR" id="A60067">
    <property type="entry name" value="A60067"/>
</dbReference>
<dbReference type="STRING" id="9986.ENSOCUP00000014722"/>
<dbReference type="PaxDb" id="9986-ENSOCUP00000014722"/>
<dbReference type="eggNOG" id="ENOG502S1QB">
    <property type="taxonomic scope" value="Eukaryota"/>
</dbReference>
<dbReference type="InParanoid" id="P34965"/>
<dbReference type="Proteomes" id="UP000001811">
    <property type="component" value="Unplaced"/>
</dbReference>
<dbReference type="GO" id="GO:0005576">
    <property type="term" value="C:extracellular region"/>
    <property type="evidence" value="ECO:0007669"/>
    <property type="project" value="UniProtKB-SubCell"/>
</dbReference>
<dbReference type="GO" id="GO:0005179">
    <property type="term" value="F:hormone activity"/>
    <property type="evidence" value="ECO:0007669"/>
    <property type="project" value="UniProtKB-KW"/>
</dbReference>
<dbReference type="GO" id="GO:0006940">
    <property type="term" value="P:regulation of smooth muscle contraction"/>
    <property type="evidence" value="ECO:0007669"/>
    <property type="project" value="InterPro"/>
</dbReference>
<dbReference type="InterPro" id="IPR018070">
    <property type="entry name" value="Neuromedin-U_amidation-site"/>
</dbReference>
<dbReference type="InterPro" id="IPR008200">
    <property type="entry name" value="NMU_C"/>
</dbReference>
<dbReference type="Pfam" id="PF02070">
    <property type="entry name" value="NMU"/>
    <property type="match status" value="1"/>
</dbReference>
<dbReference type="SMART" id="SM00084">
    <property type="entry name" value="NMU"/>
    <property type="match status" value="1"/>
</dbReference>
<dbReference type="PROSITE" id="PS00967">
    <property type="entry name" value="NMU"/>
    <property type="match status" value="1"/>
</dbReference>
<proteinExistence type="evidence at protein level"/>
<keyword id="KW-0027">Amidation</keyword>
<keyword id="KW-0903">Direct protein sequencing</keyword>
<keyword id="KW-0372">Hormone</keyword>
<keyword id="KW-1185">Reference proteome</keyword>
<keyword id="KW-0964">Secreted</keyword>
<evidence type="ECO:0000269" key="1">
    <source>
    </source>
</evidence>
<evidence type="ECO:0000305" key="2"/>
<sequence>FPVDEEFQSPFGSRSRGYFLFRPRN</sequence>
<gene>
    <name type="primary">NMU</name>
</gene>
<feature type="peptide" id="PRO_0000044073" description="Neuromedin-U-25">
    <location>
        <begin position="1"/>
        <end position="25"/>
    </location>
</feature>
<feature type="modified residue" description="Asparagine amide" evidence="1">
    <location>
        <position position="25"/>
    </location>
</feature>
<organism>
    <name type="scientific">Oryctolagus cuniculus</name>
    <name type="common">Rabbit</name>
    <dbReference type="NCBI Taxonomy" id="9986"/>
    <lineage>
        <taxon>Eukaryota</taxon>
        <taxon>Metazoa</taxon>
        <taxon>Chordata</taxon>
        <taxon>Craniata</taxon>
        <taxon>Vertebrata</taxon>
        <taxon>Euteleostomi</taxon>
        <taxon>Mammalia</taxon>
        <taxon>Eutheria</taxon>
        <taxon>Euarchontoglires</taxon>
        <taxon>Glires</taxon>
        <taxon>Lagomorpha</taxon>
        <taxon>Leporidae</taxon>
        <taxon>Oryctolagus</taxon>
    </lineage>
</organism>